<sequence length="340" mass="39025">MVREEVAVSTRTLQWKCVESRTDSNRLYYGRFVLSPLMKGQADTIGIAMRKALLGEIEGTCITRAKSEKVPHEYSTIVGIEESVHEILMNLKEIVLKSNLYGTRDASICVRGPKYVTAQDIISPPSVEIVDTTQHIASLTEPINLCIELQIERDRGYRMKAPNNYQDGSYPIDAVSMPVRNANHSIHSYGSGNEKQEILFLEIWTNGSLTPKEALHEASRNLIDLFIPFLHAEEQDIHLNLEDNQNRFTVSPFTLHDRLGNIRKNKKEIALKCIFIDQSELPTRTYNCLKRSNIHTLLDLLNNSQEDLMRIEHFRIEDIKQILDILQKHFGIDLPKNKRF</sequence>
<evidence type="ECO:0000255" key="1">
    <source>
        <dbReference type="HAMAP-Rule" id="MF_00059"/>
    </source>
</evidence>
<protein>
    <recommendedName>
        <fullName evidence="1">DNA-directed RNA polymerase subunit alpha</fullName>
        <shortName evidence="1">PEP</shortName>
        <ecNumber evidence="1">2.7.7.6</ecNumber>
    </recommendedName>
    <alternativeName>
        <fullName evidence="1">Plastid-encoded RNA polymerase subunit alpha</fullName>
        <shortName evidence="1">RNA polymerase subunit alpha</shortName>
    </alternativeName>
</protein>
<comment type="function">
    <text evidence="1">DNA-dependent RNA polymerase catalyzes the transcription of DNA into RNA using the four ribonucleoside triphosphates as substrates.</text>
</comment>
<comment type="catalytic activity">
    <reaction evidence="1">
        <text>RNA(n) + a ribonucleoside 5'-triphosphate = RNA(n+1) + diphosphate</text>
        <dbReference type="Rhea" id="RHEA:21248"/>
        <dbReference type="Rhea" id="RHEA-COMP:14527"/>
        <dbReference type="Rhea" id="RHEA-COMP:17342"/>
        <dbReference type="ChEBI" id="CHEBI:33019"/>
        <dbReference type="ChEBI" id="CHEBI:61557"/>
        <dbReference type="ChEBI" id="CHEBI:140395"/>
        <dbReference type="EC" id="2.7.7.6"/>
    </reaction>
</comment>
<comment type="subunit">
    <text evidence="1">In plastids the minimal PEP RNA polymerase catalytic core is composed of four subunits: alpha, beta, beta', and beta''. When a (nuclear-encoded) sigma factor is associated with the core the holoenzyme is formed, which can initiate transcription.</text>
</comment>
<comment type="subcellular location">
    <subcellularLocation>
        <location>Plastid</location>
        <location>Chloroplast</location>
    </subcellularLocation>
</comment>
<comment type="domain">
    <text evidence="1">The N-terminal domain is essential for RNAP assembly and basal transcription, whereas the C-terminal domain is involved in interaction with transcriptional regulators and with upstream promoter elements.</text>
</comment>
<comment type="similarity">
    <text evidence="1">Belongs to the RNA polymerase alpha chain family.</text>
</comment>
<reference key="1">
    <citation type="journal article" date="2003" name="Plant Syst. Evol.">
        <title>The chloroplast genome of the 'basal' angiosperm Calycanthus fertilis -- structural and phylogenetic analyses.</title>
        <authorList>
            <person name="Goremykin V."/>
            <person name="Hirsch-Ernst K.I."/>
            <person name="Woelfl S."/>
            <person name="Hellwig F.H."/>
        </authorList>
    </citation>
    <scope>NUCLEOTIDE SEQUENCE [LARGE SCALE GENOMIC DNA]</scope>
</reference>
<organism>
    <name type="scientific">Calycanthus floridus var. glaucus</name>
    <name type="common">Eastern sweetshrub</name>
    <name type="synonym">Calycanthus fertilis var. ferax</name>
    <dbReference type="NCBI Taxonomy" id="212734"/>
    <lineage>
        <taxon>Eukaryota</taxon>
        <taxon>Viridiplantae</taxon>
        <taxon>Streptophyta</taxon>
        <taxon>Embryophyta</taxon>
        <taxon>Tracheophyta</taxon>
        <taxon>Spermatophyta</taxon>
        <taxon>Magnoliopsida</taxon>
        <taxon>Magnoliidae</taxon>
        <taxon>Laurales</taxon>
        <taxon>Calycanthaceae</taxon>
        <taxon>Calycanthus</taxon>
    </lineage>
</organism>
<gene>
    <name evidence="1" type="primary">rpoA</name>
</gene>
<name>RPOA_CALFG</name>
<dbReference type="EC" id="2.7.7.6" evidence="1"/>
<dbReference type="EMBL" id="AJ428413">
    <property type="protein sequence ID" value="CAD28752.1"/>
    <property type="molecule type" value="Genomic_DNA"/>
</dbReference>
<dbReference type="RefSeq" id="NP_862785.1">
    <property type="nucleotide sequence ID" value="NC_004993.1"/>
</dbReference>
<dbReference type="SMR" id="Q7YJU6"/>
<dbReference type="GeneID" id="2598031"/>
<dbReference type="GO" id="GO:0009507">
    <property type="term" value="C:chloroplast"/>
    <property type="evidence" value="ECO:0007669"/>
    <property type="project" value="UniProtKB-SubCell"/>
</dbReference>
<dbReference type="GO" id="GO:0000428">
    <property type="term" value="C:DNA-directed RNA polymerase complex"/>
    <property type="evidence" value="ECO:0007669"/>
    <property type="project" value="UniProtKB-KW"/>
</dbReference>
<dbReference type="GO" id="GO:0005739">
    <property type="term" value="C:mitochondrion"/>
    <property type="evidence" value="ECO:0007669"/>
    <property type="project" value="GOC"/>
</dbReference>
<dbReference type="GO" id="GO:0003677">
    <property type="term" value="F:DNA binding"/>
    <property type="evidence" value="ECO:0007669"/>
    <property type="project" value="UniProtKB-UniRule"/>
</dbReference>
<dbReference type="GO" id="GO:0003899">
    <property type="term" value="F:DNA-directed RNA polymerase activity"/>
    <property type="evidence" value="ECO:0007669"/>
    <property type="project" value="UniProtKB-UniRule"/>
</dbReference>
<dbReference type="GO" id="GO:0046983">
    <property type="term" value="F:protein dimerization activity"/>
    <property type="evidence" value="ECO:0007669"/>
    <property type="project" value="InterPro"/>
</dbReference>
<dbReference type="GO" id="GO:0006351">
    <property type="term" value="P:DNA-templated transcription"/>
    <property type="evidence" value="ECO:0007669"/>
    <property type="project" value="UniProtKB-UniRule"/>
</dbReference>
<dbReference type="CDD" id="cd06928">
    <property type="entry name" value="RNAP_alpha_NTD"/>
    <property type="match status" value="1"/>
</dbReference>
<dbReference type="FunFam" id="1.10.150.20:FF:000021">
    <property type="entry name" value="DNA-directed RNA polymerase subunit alpha"/>
    <property type="match status" value="1"/>
</dbReference>
<dbReference type="FunFam" id="2.170.120.12:FF:000001">
    <property type="entry name" value="DNA-directed RNA polymerase subunit alpha"/>
    <property type="match status" value="1"/>
</dbReference>
<dbReference type="Gene3D" id="1.10.150.20">
    <property type="entry name" value="5' to 3' exonuclease, C-terminal subdomain"/>
    <property type="match status" value="1"/>
</dbReference>
<dbReference type="Gene3D" id="2.170.120.12">
    <property type="entry name" value="DNA-directed RNA polymerase, insert domain"/>
    <property type="match status" value="1"/>
</dbReference>
<dbReference type="Gene3D" id="3.30.1360.10">
    <property type="entry name" value="RNA polymerase, RBP11-like subunit"/>
    <property type="match status" value="1"/>
</dbReference>
<dbReference type="HAMAP" id="MF_00059">
    <property type="entry name" value="RNApol_bact_RpoA"/>
    <property type="match status" value="1"/>
</dbReference>
<dbReference type="InterPro" id="IPR011262">
    <property type="entry name" value="DNA-dir_RNA_pol_insert"/>
</dbReference>
<dbReference type="InterPro" id="IPR011263">
    <property type="entry name" value="DNA-dir_RNA_pol_RpoA/D/Rpb3"/>
</dbReference>
<dbReference type="InterPro" id="IPR011773">
    <property type="entry name" value="DNA-dir_RpoA"/>
</dbReference>
<dbReference type="InterPro" id="IPR036603">
    <property type="entry name" value="RBP11-like"/>
</dbReference>
<dbReference type="InterPro" id="IPR011260">
    <property type="entry name" value="RNAP_asu_C"/>
</dbReference>
<dbReference type="InterPro" id="IPR036643">
    <property type="entry name" value="RNApol_insert_sf"/>
</dbReference>
<dbReference type="NCBIfam" id="TIGR02027">
    <property type="entry name" value="rpoA"/>
    <property type="match status" value="1"/>
</dbReference>
<dbReference type="Pfam" id="PF01000">
    <property type="entry name" value="RNA_pol_A_bac"/>
    <property type="match status" value="1"/>
</dbReference>
<dbReference type="Pfam" id="PF03118">
    <property type="entry name" value="RNA_pol_A_CTD"/>
    <property type="match status" value="1"/>
</dbReference>
<dbReference type="Pfam" id="PF01193">
    <property type="entry name" value="RNA_pol_L"/>
    <property type="match status" value="1"/>
</dbReference>
<dbReference type="SMART" id="SM00662">
    <property type="entry name" value="RPOLD"/>
    <property type="match status" value="1"/>
</dbReference>
<dbReference type="SUPFAM" id="SSF47789">
    <property type="entry name" value="C-terminal domain of RNA polymerase alpha subunit"/>
    <property type="match status" value="1"/>
</dbReference>
<dbReference type="SUPFAM" id="SSF56553">
    <property type="entry name" value="Insert subdomain of RNA polymerase alpha subunit"/>
    <property type="match status" value="1"/>
</dbReference>
<dbReference type="SUPFAM" id="SSF55257">
    <property type="entry name" value="RBP11-like subunits of RNA polymerase"/>
    <property type="match status" value="1"/>
</dbReference>
<keyword id="KW-0150">Chloroplast</keyword>
<keyword id="KW-0240">DNA-directed RNA polymerase</keyword>
<keyword id="KW-0548">Nucleotidyltransferase</keyword>
<keyword id="KW-0934">Plastid</keyword>
<keyword id="KW-0804">Transcription</keyword>
<keyword id="KW-0808">Transferase</keyword>
<accession>Q7YJU6</accession>
<feature type="chain" id="PRO_0000175444" description="DNA-directed RNA polymerase subunit alpha">
    <location>
        <begin position="1"/>
        <end position="340"/>
    </location>
</feature>
<feature type="region of interest" description="Alpha N-terminal domain (alpha-NTD)" evidence="1">
    <location>
        <begin position="1"/>
        <end position="233"/>
    </location>
</feature>
<feature type="region of interest" description="Alpha C-terminal domain (alpha-CTD)" evidence="1">
    <location>
        <begin position="266"/>
        <end position="340"/>
    </location>
</feature>
<proteinExistence type="inferred from homology"/>
<geneLocation type="chloroplast"/>